<protein>
    <recommendedName>
        <fullName evidence="1">Iron-binding protein IscA</fullName>
    </recommendedName>
    <alternativeName>
        <fullName evidence="1">Iron-sulfur cluster assembly protein</fullName>
    </alternativeName>
</protein>
<gene>
    <name evidence="1" type="primary">iscA</name>
    <name type="ordered locus">YPTS_2965</name>
</gene>
<proteinExistence type="inferred from homology"/>
<dbReference type="EMBL" id="CP001048">
    <property type="protein sequence ID" value="ACC89922.1"/>
    <property type="molecule type" value="Genomic_DNA"/>
</dbReference>
<dbReference type="RefSeq" id="WP_002209834.1">
    <property type="nucleotide sequence ID" value="NZ_CP009780.1"/>
</dbReference>
<dbReference type="SMR" id="B2K9R5"/>
<dbReference type="GeneID" id="96662216"/>
<dbReference type="KEGG" id="ypb:YPTS_2965"/>
<dbReference type="PATRIC" id="fig|502801.10.peg.2397"/>
<dbReference type="GO" id="GO:0005829">
    <property type="term" value="C:cytosol"/>
    <property type="evidence" value="ECO:0007669"/>
    <property type="project" value="TreeGrafter"/>
</dbReference>
<dbReference type="GO" id="GO:0051537">
    <property type="term" value="F:2 iron, 2 sulfur cluster binding"/>
    <property type="evidence" value="ECO:0007669"/>
    <property type="project" value="TreeGrafter"/>
</dbReference>
<dbReference type="GO" id="GO:0005506">
    <property type="term" value="F:iron ion binding"/>
    <property type="evidence" value="ECO:0007669"/>
    <property type="project" value="UniProtKB-UniRule"/>
</dbReference>
<dbReference type="GO" id="GO:0016226">
    <property type="term" value="P:iron-sulfur cluster assembly"/>
    <property type="evidence" value="ECO:0007669"/>
    <property type="project" value="UniProtKB-UniRule"/>
</dbReference>
<dbReference type="FunFam" id="2.60.300.12:FF:000001">
    <property type="entry name" value="Iron-binding protein IscA"/>
    <property type="match status" value="1"/>
</dbReference>
<dbReference type="Gene3D" id="2.60.300.12">
    <property type="entry name" value="HesB-like domain"/>
    <property type="match status" value="1"/>
</dbReference>
<dbReference type="HAMAP" id="MF_01429">
    <property type="entry name" value="Fe_S_insert_IscA"/>
    <property type="match status" value="1"/>
</dbReference>
<dbReference type="InterPro" id="IPR050322">
    <property type="entry name" value="Fe-S_cluster_asmbl/transfer"/>
</dbReference>
<dbReference type="InterPro" id="IPR000361">
    <property type="entry name" value="FeS_biogenesis"/>
</dbReference>
<dbReference type="InterPro" id="IPR016092">
    <property type="entry name" value="FeS_cluster_insertion"/>
</dbReference>
<dbReference type="InterPro" id="IPR017870">
    <property type="entry name" value="FeS_cluster_insertion_CS"/>
</dbReference>
<dbReference type="InterPro" id="IPR035903">
    <property type="entry name" value="HesB-like_dom_sf"/>
</dbReference>
<dbReference type="InterPro" id="IPR011302">
    <property type="entry name" value="IscA_proteobacteria"/>
</dbReference>
<dbReference type="NCBIfam" id="TIGR00049">
    <property type="entry name" value="iron-sulfur cluster assembly accessory protein"/>
    <property type="match status" value="1"/>
</dbReference>
<dbReference type="NCBIfam" id="TIGR02011">
    <property type="entry name" value="IscA"/>
    <property type="match status" value="1"/>
</dbReference>
<dbReference type="NCBIfam" id="NF007049">
    <property type="entry name" value="PRK09502.1"/>
    <property type="match status" value="1"/>
</dbReference>
<dbReference type="PANTHER" id="PTHR10072:SF41">
    <property type="entry name" value="IRON-SULFUR CLUSTER ASSEMBLY 1 HOMOLOG, MITOCHONDRIAL"/>
    <property type="match status" value="1"/>
</dbReference>
<dbReference type="PANTHER" id="PTHR10072">
    <property type="entry name" value="IRON-SULFUR CLUSTER ASSEMBLY PROTEIN"/>
    <property type="match status" value="1"/>
</dbReference>
<dbReference type="Pfam" id="PF01521">
    <property type="entry name" value="Fe-S_biosyn"/>
    <property type="match status" value="1"/>
</dbReference>
<dbReference type="SUPFAM" id="SSF89360">
    <property type="entry name" value="HesB-like domain"/>
    <property type="match status" value="1"/>
</dbReference>
<dbReference type="PROSITE" id="PS01152">
    <property type="entry name" value="HESB"/>
    <property type="match status" value="1"/>
</dbReference>
<organism>
    <name type="scientific">Yersinia pseudotuberculosis serotype IB (strain PB1/+)</name>
    <dbReference type="NCBI Taxonomy" id="502801"/>
    <lineage>
        <taxon>Bacteria</taxon>
        <taxon>Pseudomonadati</taxon>
        <taxon>Pseudomonadota</taxon>
        <taxon>Gammaproteobacteria</taxon>
        <taxon>Enterobacterales</taxon>
        <taxon>Yersiniaceae</taxon>
        <taxon>Yersinia</taxon>
    </lineage>
</organism>
<reference key="1">
    <citation type="submission" date="2008-04" db="EMBL/GenBank/DDBJ databases">
        <title>Complete sequence of Yersinia pseudotuberculosis PB1/+.</title>
        <authorList>
            <person name="Copeland A."/>
            <person name="Lucas S."/>
            <person name="Lapidus A."/>
            <person name="Glavina del Rio T."/>
            <person name="Dalin E."/>
            <person name="Tice H."/>
            <person name="Bruce D."/>
            <person name="Goodwin L."/>
            <person name="Pitluck S."/>
            <person name="Munk A.C."/>
            <person name="Brettin T."/>
            <person name="Detter J.C."/>
            <person name="Han C."/>
            <person name="Tapia R."/>
            <person name="Schmutz J."/>
            <person name="Larimer F."/>
            <person name="Land M."/>
            <person name="Hauser L."/>
            <person name="Challacombe J.F."/>
            <person name="Green L."/>
            <person name="Lindler L.E."/>
            <person name="Nikolich M.P."/>
            <person name="Richardson P."/>
        </authorList>
    </citation>
    <scope>NUCLEOTIDE SEQUENCE [LARGE SCALE GENOMIC DNA]</scope>
    <source>
        <strain>PB1/+</strain>
    </source>
</reference>
<sequence length="107" mass="11589">MSISISDSAAQRVSAFLNHRGKGLGLRLGVRTSGCSGMAYVLEFVDEINDDDIVFEDKGVKVIIDGKSMVYLDGTELDFVKEGLNEGFKFNNPNVSNECGCGESFNV</sequence>
<name>ISCA_YERPB</name>
<feature type="chain" id="PRO_1000145767" description="Iron-binding protein IscA">
    <location>
        <begin position="1"/>
        <end position="107"/>
    </location>
</feature>
<feature type="binding site" evidence="1">
    <location>
        <position position="35"/>
    </location>
    <ligand>
        <name>Fe cation</name>
        <dbReference type="ChEBI" id="CHEBI:24875"/>
    </ligand>
</feature>
<feature type="binding site" evidence="1">
    <location>
        <position position="99"/>
    </location>
    <ligand>
        <name>Fe cation</name>
        <dbReference type="ChEBI" id="CHEBI:24875"/>
    </ligand>
</feature>
<feature type="binding site" evidence="1">
    <location>
        <position position="101"/>
    </location>
    <ligand>
        <name>Fe cation</name>
        <dbReference type="ChEBI" id="CHEBI:24875"/>
    </ligand>
</feature>
<keyword id="KW-0408">Iron</keyword>
<keyword id="KW-0479">Metal-binding</keyword>
<evidence type="ECO:0000255" key="1">
    <source>
        <dbReference type="HAMAP-Rule" id="MF_01429"/>
    </source>
</evidence>
<comment type="function">
    <text evidence="1">Is able to transfer iron-sulfur clusters to apo-ferredoxin. Multiple cycles of [2Fe2S] cluster formation and transfer are observed, suggesting that IscA acts catalytically. Recruits intracellular free iron so as to provide iron for the assembly of transient iron-sulfur cluster in IscU in the presence of IscS, L-cysteine and the thioredoxin reductase system TrxA/TrxB.</text>
</comment>
<comment type="cofactor">
    <cofactor evidence="1">
        <name>Fe cation</name>
        <dbReference type="ChEBI" id="CHEBI:24875"/>
    </cofactor>
    <text evidence="1">Binds 2 iron ions per dimer. The dimer may bind additional iron ions.</text>
</comment>
<comment type="subunit">
    <text evidence="1">Homodimer; may form tetramers and higher multimers.</text>
</comment>
<comment type="similarity">
    <text evidence="1">Belongs to the HesB/IscA family.</text>
</comment>
<accession>B2K9R5</accession>